<proteinExistence type="inferred from homology"/>
<feature type="chain" id="PRO_0000193954" description="Iron-sulfur cluster assembly protein CyaY">
    <location>
        <begin position="1"/>
        <end position="113"/>
    </location>
</feature>
<protein>
    <recommendedName>
        <fullName evidence="1">Iron-sulfur cluster assembly protein CyaY</fullName>
    </recommendedName>
</protein>
<name>CYAY_RALN1</name>
<keyword id="KW-0408">Iron</keyword>
<keyword id="KW-0479">Metal-binding</keyword>
<keyword id="KW-1185">Reference proteome</keyword>
<accession>Q8XV54</accession>
<reference key="1">
    <citation type="journal article" date="2002" name="Nature">
        <title>Genome sequence of the plant pathogen Ralstonia solanacearum.</title>
        <authorList>
            <person name="Salanoubat M."/>
            <person name="Genin S."/>
            <person name="Artiguenave F."/>
            <person name="Gouzy J."/>
            <person name="Mangenot S."/>
            <person name="Arlat M."/>
            <person name="Billault A."/>
            <person name="Brottier P."/>
            <person name="Camus J.-C."/>
            <person name="Cattolico L."/>
            <person name="Chandler M."/>
            <person name="Choisne N."/>
            <person name="Claudel-Renard C."/>
            <person name="Cunnac S."/>
            <person name="Demange N."/>
            <person name="Gaspin C."/>
            <person name="Lavie M."/>
            <person name="Moisan A."/>
            <person name="Robert C."/>
            <person name="Saurin W."/>
            <person name="Schiex T."/>
            <person name="Siguier P."/>
            <person name="Thebault P."/>
            <person name="Whalen M."/>
            <person name="Wincker P."/>
            <person name="Levy M."/>
            <person name="Weissenbach J."/>
            <person name="Boucher C.A."/>
        </authorList>
    </citation>
    <scope>NUCLEOTIDE SEQUENCE [LARGE SCALE GENOMIC DNA]</scope>
    <source>
        <strain>ATCC BAA-1114 / GMI1000</strain>
    </source>
</reference>
<sequence length="113" mass="12597">MPPLTESEFLALADAELGRIERTVERAADEVDADIEIGRVGNVLTLEFDDGSKIIINSQTPMQELWVAARAGGFHFRRNDGRWVDTRSGEELYVALSRYVSQQSEVDVTLVAD</sequence>
<organism>
    <name type="scientific">Ralstonia nicotianae (strain ATCC BAA-1114 / GMI1000)</name>
    <name type="common">Ralstonia solanacearum</name>
    <dbReference type="NCBI Taxonomy" id="267608"/>
    <lineage>
        <taxon>Bacteria</taxon>
        <taxon>Pseudomonadati</taxon>
        <taxon>Pseudomonadota</taxon>
        <taxon>Betaproteobacteria</taxon>
        <taxon>Burkholderiales</taxon>
        <taxon>Burkholderiaceae</taxon>
        <taxon>Ralstonia</taxon>
        <taxon>Ralstonia solanacearum species complex</taxon>
    </lineage>
</organism>
<comment type="function">
    <text evidence="1">Involved in iron-sulfur (Fe-S) cluster assembly. May act as a regulator of Fe-S biogenesis.</text>
</comment>
<comment type="similarity">
    <text evidence="1">Belongs to the frataxin family.</text>
</comment>
<evidence type="ECO:0000255" key="1">
    <source>
        <dbReference type="HAMAP-Rule" id="MF_00142"/>
    </source>
</evidence>
<dbReference type="EMBL" id="AL646052">
    <property type="protein sequence ID" value="CAD16686.1"/>
    <property type="molecule type" value="Genomic_DNA"/>
</dbReference>
<dbReference type="RefSeq" id="WP_011002882.1">
    <property type="nucleotide sequence ID" value="NC_003295.1"/>
</dbReference>
<dbReference type="SMR" id="Q8XV54"/>
<dbReference type="STRING" id="267608.RSc2977"/>
<dbReference type="EnsemblBacteria" id="CAD16686">
    <property type="protein sequence ID" value="CAD16686"/>
    <property type="gene ID" value="RSc2977"/>
</dbReference>
<dbReference type="KEGG" id="rso:RSc2977"/>
<dbReference type="eggNOG" id="COG1965">
    <property type="taxonomic scope" value="Bacteria"/>
</dbReference>
<dbReference type="HOGENOM" id="CLU_080880_3_0_4"/>
<dbReference type="Proteomes" id="UP000001436">
    <property type="component" value="Chromosome"/>
</dbReference>
<dbReference type="GO" id="GO:0005829">
    <property type="term" value="C:cytosol"/>
    <property type="evidence" value="ECO:0007669"/>
    <property type="project" value="TreeGrafter"/>
</dbReference>
<dbReference type="GO" id="GO:0008199">
    <property type="term" value="F:ferric iron binding"/>
    <property type="evidence" value="ECO:0007669"/>
    <property type="project" value="InterPro"/>
</dbReference>
<dbReference type="GO" id="GO:0008198">
    <property type="term" value="F:ferrous iron binding"/>
    <property type="evidence" value="ECO:0007669"/>
    <property type="project" value="TreeGrafter"/>
</dbReference>
<dbReference type="GO" id="GO:0016226">
    <property type="term" value="P:iron-sulfur cluster assembly"/>
    <property type="evidence" value="ECO:0007669"/>
    <property type="project" value="UniProtKB-UniRule"/>
</dbReference>
<dbReference type="CDD" id="cd00503">
    <property type="entry name" value="Frataxin"/>
    <property type="match status" value="1"/>
</dbReference>
<dbReference type="Gene3D" id="3.30.920.10">
    <property type="entry name" value="Frataxin/CyaY"/>
    <property type="match status" value="1"/>
</dbReference>
<dbReference type="HAMAP" id="MF_00142">
    <property type="entry name" value="CyaY"/>
    <property type="match status" value="1"/>
</dbReference>
<dbReference type="InterPro" id="IPR047584">
    <property type="entry name" value="CyaY"/>
</dbReference>
<dbReference type="InterPro" id="IPR002908">
    <property type="entry name" value="Frataxin/CyaY"/>
</dbReference>
<dbReference type="InterPro" id="IPR036524">
    <property type="entry name" value="Frataxin/CyaY_sf"/>
</dbReference>
<dbReference type="InterPro" id="IPR020895">
    <property type="entry name" value="Frataxin_CS"/>
</dbReference>
<dbReference type="NCBIfam" id="TIGR03421">
    <property type="entry name" value="FeS_CyaY"/>
    <property type="match status" value="1"/>
</dbReference>
<dbReference type="PANTHER" id="PTHR16821">
    <property type="entry name" value="FRATAXIN"/>
    <property type="match status" value="1"/>
</dbReference>
<dbReference type="PANTHER" id="PTHR16821:SF2">
    <property type="entry name" value="FRATAXIN, MITOCHONDRIAL"/>
    <property type="match status" value="1"/>
</dbReference>
<dbReference type="Pfam" id="PF01491">
    <property type="entry name" value="Frataxin_Cyay"/>
    <property type="match status" value="1"/>
</dbReference>
<dbReference type="SMART" id="SM01219">
    <property type="entry name" value="Frataxin_Cyay"/>
    <property type="match status" value="1"/>
</dbReference>
<dbReference type="SUPFAM" id="SSF55387">
    <property type="entry name" value="Frataxin/Nqo15-like"/>
    <property type="match status" value="1"/>
</dbReference>
<dbReference type="PROSITE" id="PS01344">
    <property type="entry name" value="FRATAXIN_1"/>
    <property type="match status" value="1"/>
</dbReference>
<dbReference type="PROSITE" id="PS50810">
    <property type="entry name" value="FRATAXIN_2"/>
    <property type="match status" value="1"/>
</dbReference>
<gene>
    <name evidence="1" type="primary">cyaY</name>
    <name type="ordered locus">RSc2977</name>
    <name type="ORF">RS01320</name>
</gene>